<feature type="chain" id="PRO_1000055991" description="Large ribosomal subunit protein bL17">
    <location>
        <begin position="1"/>
        <end position="122"/>
    </location>
</feature>
<accession>Q8D1Y7</accession>
<comment type="subunit">
    <text evidence="1">Part of the 50S ribosomal subunit. Contacts protein L32.</text>
</comment>
<comment type="similarity">
    <text evidence="1">Belongs to the bacterial ribosomal protein bL17 family.</text>
</comment>
<reference key="1">
    <citation type="journal article" date="2002" name="Nat. Genet.">
        <title>Genome sequence of the endocellular obligate symbiont of tsetse flies, Wigglesworthia glossinidia.</title>
        <authorList>
            <person name="Akman L."/>
            <person name="Yamashita A."/>
            <person name="Watanabe H."/>
            <person name="Oshima K."/>
            <person name="Shiba T."/>
            <person name="Hattori M."/>
            <person name="Aksoy S."/>
        </authorList>
    </citation>
    <scope>NUCLEOTIDE SEQUENCE [LARGE SCALE GENOMIC DNA]</scope>
</reference>
<gene>
    <name evidence="1" type="primary">rplQ</name>
    <name type="ordered locus">WIGBR5690</name>
</gene>
<organism>
    <name type="scientific">Wigglesworthia glossinidia brevipalpis</name>
    <dbReference type="NCBI Taxonomy" id="36870"/>
    <lineage>
        <taxon>Bacteria</taxon>
        <taxon>Pseudomonadati</taxon>
        <taxon>Pseudomonadota</taxon>
        <taxon>Gammaproteobacteria</taxon>
        <taxon>Enterobacterales</taxon>
        <taxon>Erwiniaceae</taxon>
        <taxon>Wigglesworthia</taxon>
    </lineage>
</organism>
<dbReference type="EMBL" id="BA000021">
    <property type="protein sequence ID" value="BAC24715.1"/>
    <property type="molecule type" value="Genomic_DNA"/>
</dbReference>
<dbReference type="SMR" id="Q8D1Y7"/>
<dbReference type="STRING" id="36870.gene:10369078"/>
<dbReference type="KEGG" id="wbr:rplQ"/>
<dbReference type="eggNOG" id="COG0203">
    <property type="taxonomic scope" value="Bacteria"/>
</dbReference>
<dbReference type="HOGENOM" id="CLU_074407_2_0_6"/>
<dbReference type="OrthoDB" id="9809073at2"/>
<dbReference type="Proteomes" id="UP000000562">
    <property type="component" value="Chromosome"/>
</dbReference>
<dbReference type="GO" id="GO:0022625">
    <property type="term" value="C:cytosolic large ribosomal subunit"/>
    <property type="evidence" value="ECO:0007669"/>
    <property type="project" value="TreeGrafter"/>
</dbReference>
<dbReference type="GO" id="GO:0003735">
    <property type="term" value="F:structural constituent of ribosome"/>
    <property type="evidence" value="ECO:0007669"/>
    <property type="project" value="InterPro"/>
</dbReference>
<dbReference type="GO" id="GO:0006412">
    <property type="term" value="P:translation"/>
    <property type="evidence" value="ECO:0007669"/>
    <property type="project" value="UniProtKB-UniRule"/>
</dbReference>
<dbReference type="FunFam" id="3.90.1030.10:FF:000001">
    <property type="entry name" value="50S ribosomal protein L17"/>
    <property type="match status" value="1"/>
</dbReference>
<dbReference type="Gene3D" id="3.90.1030.10">
    <property type="entry name" value="Ribosomal protein L17"/>
    <property type="match status" value="1"/>
</dbReference>
<dbReference type="HAMAP" id="MF_01368">
    <property type="entry name" value="Ribosomal_bL17"/>
    <property type="match status" value="1"/>
</dbReference>
<dbReference type="InterPro" id="IPR000456">
    <property type="entry name" value="Ribosomal_bL17"/>
</dbReference>
<dbReference type="InterPro" id="IPR047859">
    <property type="entry name" value="Ribosomal_bL17_CS"/>
</dbReference>
<dbReference type="InterPro" id="IPR036373">
    <property type="entry name" value="Ribosomal_bL17_sf"/>
</dbReference>
<dbReference type="NCBIfam" id="TIGR00059">
    <property type="entry name" value="L17"/>
    <property type="match status" value="1"/>
</dbReference>
<dbReference type="PANTHER" id="PTHR14413:SF16">
    <property type="entry name" value="LARGE RIBOSOMAL SUBUNIT PROTEIN BL17M"/>
    <property type="match status" value="1"/>
</dbReference>
<dbReference type="PANTHER" id="PTHR14413">
    <property type="entry name" value="RIBOSOMAL PROTEIN L17"/>
    <property type="match status" value="1"/>
</dbReference>
<dbReference type="Pfam" id="PF01196">
    <property type="entry name" value="Ribosomal_L17"/>
    <property type="match status" value="1"/>
</dbReference>
<dbReference type="SUPFAM" id="SSF64263">
    <property type="entry name" value="Prokaryotic ribosomal protein L17"/>
    <property type="match status" value="1"/>
</dbReference>
<dbReference type="PROSITE" id="PS01167">
    <property type="entry name" value="RIBOSOMAL_L17"/>
    <property type="match status" value="1"/>
</dbReference>
<evidence type="ECO:0000255" key="1">
    <source>
        <dbReference type="HAMAP-Rule" id="MF_01368"/>
    </source>
</evidence>
<evidence type="ECO:0000305" key="2"/>
<sequence length="122" mass="14383">MRHRNTGRYLGRNSSHRDSMLKNMIISLIRYEIIHTTLQKAKELRKILEPLITISKINSISNRRNIYSKIRNNEIIHKLFNDIGPRFLKKNGGYLSILKSGYRKGDNAYMAYIKFTNTKKNI</sequence>
<protein>
    <recommendedName>
        <fullName evidence="1">Large ribosomal subunit protein bL17</fullName>
    </recommendedName>
    <alternativeName>
        <fullName evidence="2">50S ribosomal protein L17</fullName>
    </alternativeName>
</protein>
<name>RL17_WIGBR</name>
<proteinExistence type="inferred from homology"/>
<keyword id="KW-1185">Reference proteome</keyword>
<keyword id="KW-0687">Ribonucleoprotein</keyword>
<keyword id="KW-0689">Ribosomal protein</keyword>